<accession>B8ZUA9</accession>
<reference key="1">
    <citation type="journal article" date="2009" name="Nat. Genet.">
        <title>Comparative genomic and phylogeographic analysis of Mycobacterium leprae.</title>
        <authorList>
            <person name="Monot M."/>
            <person name="Honore N."/>
            <person name="Garnier T."/>
            <person name="Zidane N."/>
            <person name="Sherafi D."/>
            <person name="Paniz-Mondolfi A."/>
            <person name="Matsuoka M."/>
            <person name="Taylor G.M."/>
            <person name="Donoghue H.D."/>
            <person name="Bouwman A."/>
            <person name="Mays S."/>
            <person name="Watson C."/>
            <person name="Lockwood D."/>
            <person name="Khamispour A."/>
            <person name="Dowlati Y."/>
            <person name="Jianping S."/>
            <person name="Rea T.H."/>
            <person name="Vera-Cabrera L."/>
            <person name="Stefani M.M."/>
            <person name="Banu S."/>
            <person name="Macdonald M."/>
            <person name="Sapkota B.R."/>
            <person name="Spencer J.S."/>
            <person name="Thomas J."/>
            <person name="Harshman K."/>
            <person name="Singh P."/>
            <person name="Busso P."/>
            <person name="Gattiker A."/>
            <person name="Rougemont J."/>
            <person name="Brennan P.J."/>
            <person name="Cole S.T."/>
        </authorList>
    </citation>
    <scope>NUCLEOTIDE SEQUENCE [LARGE SCALE GENOMIC DNA]</scope>
    <source>
        <strain>Br4923</strain>
    </source>
</reference>
<name>SYC_MYCLB</name>
<proteinExistence type="inferred from homology"/>
<keyword id="KW-0030">Aminoacyl-tRNA synthetase</keyword>
<keyword id="KW-0067">ATP-binding</keyword>
<keyword id="KW-0963">Cytoplasm</keyword>
<keyword id="KW-0436">Ligase</keyword>
<keyword id="KW-0479">Metal-binding</keyword>
<keyword id="KW-0547">Nucleotide-binding</keyword>
<keyword id="KW-0648">Protein biosynthesis</keyword>
<keyword id="KW-0862">Zinc</keyword>
<comment type="catalytic activity">
    <reaction evidence="1">
        <text>tRNA(Cys) + L-cysteine + ATP = L-cysteinyl-tRNA(Cys) + AMP + diphosphate</text>
        <dbReference type="Rhea" id="RHEA:17773"/>
        <dbReference type="Rhea" id="RHEA-COMP:9661"/>
        <dbReference type="Rhea" id="RHEA-COMP:9679"/>
        <dbReference type="ChEBI" id="CHEBI:30616"/>
        <dbReference type="ChEBI" id="CHEBI:33019"/>
        <dbReference type="ChEBI" id="CHEBI:35235"/>
        <dbReference type="ChEBI" id="CHEBI:78442"/>
        <dbReference type="ChEBI" id="CHEBI:78517"/>
        <dbReference type="ChEBI" id="CHEBI:456215"/>
        <dbReference type="EC" id="6.1.1.16"/>
    </reaction>
</comment>
<comment type="cofactor">
    <cofactor evidence="1">
        <name>Zn(2+)</name>
        <dbReference type="ChEBI" id="CHEBI:29105"/>
    </cofactor>
    <text evidence="1">Binds 1 zinc ion per subunit.</text>
</comment>
<comment type="subunit">
    <text evidence="1">Monomer.</text>
</comment>
<comment type="subcellular location">
    <subcellularLocation>
        <location evidence="1">Cytoplasm</location>
    </subcellularLocation>
</comment>
<comment type="similarity">
    <text evidence="1">Belongs to the class-I aminoacyl-tRNA synthetase family.</text>
</comment>
<evidence type="ECO:0000255" key="1">
    <source>
        <dbReference type="HAMAP-Rule" id="MF_00041"/>
    </source>
</evidence>
<feature type="chain" id="PRO_1000199080" description="Cysteine--tRNA ligase">
    <location>
        <begin position="1"/>
        <end position="473"/>
    </location>
</feature>
<feature type="short sequence motif" description="'HIGH' region">
    <location>
        <begin position="35"/>
        <end position="45"/>
    </location>
</feature>
<feature type="short sequence motif" description="'KMSKS' region">
    <location>
        <begin position="267"/>
        <end position="271"/>
    </location>
</feature>
<feature type="binding site" evidence="1">
    <location>
        <position position="33"/>
    </location>
    <ligand>
        <name>Zn(2+)</name>
        <dbReference type="ChEBI" id="CHEBI:29105"/>
    </ligand>
</feature>
<feature type="binding site" evidence="1">
    <location>
        <position position="211"/>
    </location>
    <ligand>
        <name>Zn(2+)</name>
        <dbReference type="ChEBI" id="CHEBI:29105"/>
    </ligand>
</feature>
<feature type="binding site" evidence="1">
    <location>
        <position position="236"/>
    </location>
    <ligand>
        <name>Zn(2+)</name>
        <dbReference type="ChEBI" id="CHEBI:29105"/>
    </ligand>
</feature>
<feature type="binding site" evidence="1">
    <location>
        <position position="240"/>
    </location>
    <ligand>
        <name>Zn(2+)</name>
        <dbReference type="ChEBI" id="CHEBI:29105"/>
    </ligand>
</feature>
<feature type="binding site" evidence="1">
    <location>
        <position position="270"/>
    </location>
    <ligand>
        <name>ATP</name>
        <dbReference type="ChEBI" id="CHEBI:30616"/>
    </ligand>
</feature>
<gene>
    <name evidence="1" type="primary">cysS</name>
    <name type="ordered locus">MLBr00323</name>
</gene>
<organism>
    <name type="scientific">Mycobacterium leprae (strain Br4923)</name>
    <dbReference type="NCBI Taxonomy" id="561304"/>
    <lineage>
        <taxon>Bacteria</taxon>
        <taxon>Bacillati</taxon>
        <taxon>Actinomycetota</taxon>
        <taxon>Actinomycetes</taxon>
        <taxon>Mycobacteriales</taxon>
        <taxon>Mycobacteriaceae</taxon>
        <taxon>Mycobacterium</taxon>
    </lineage>
</organism>
<protein>
    <recommendedName>
        <fullName evidence="1">Cysteine--tRNA ligase</fullName>
        <ecNumber evidence="1">6.1.1.16</ecNumber>
    </recommendedName>
    <alternativeName>
        <fullName evidence="1">Cysteinyl-tRNA synthetase</fullName>
        <shortName evidence="1">CysRS</shortName>
    </alternativeName>
</protein>
<dbReference type="EC" id="6.1.1.16" evidence="1"/>
<dbReference type="EMBL" id="FM211192">
    <property type="protein sequence ID" value="CAR70416.1"/>
    <property type="molecule type" value="Genomic_DNA"/>
</dbReference>
<dbReference type="SMR" id="B8ZUA9"/>
<dbReference type="KEGG" id="mlb:MLBr00323"/>
<dbReference type="HOGENOM" id="CLU_013528_0_1_11"/>
<dbReference type="Proteomes" id="UP000006900">
    <property type="component" value="Chromosome"/>
</dbReference>
<dbReference type="GO" id="GO:0005829">
    <property type="term" value="C:cytosol"/>
    <property type="evidence" value="ECO:0007669"/>
    <property type="project" value="TreeGrafter"/>
</dbReference>
<dbReference type="GO" id="GO:0005524">
    <property type="term" value="F:ATP binding"/>
    <property type="evidence" value="ECO:0007669"/>
    <property type="project" value="UniProtKB-UniRule"/>
</dbReference>
<dbReference type="GO" id="GO:0004817">
    <property type="term" value="F:cysteine-tRNA ligase activity"/>
    <property type="evidence" value="ECO:0007669"/>
    <property type="project" value="UniProtKB-UniRule"/>
</dbReference>
<dbReference type="GO" id="GO:0008270">
    <property type="term" value="F:zinc ion binding"/>
    <property type="evidence" value="ECO:0007669"/>
    <property type="project" value="UniProtKB-UniRule"/>
</dbReference>
<dbReference type="GO" id="GO:0006423">
    <property type="term" value="P:cysteinyl-tRNA aminoacylation"/>
    <property type="evidence" value="ECO:0007669"/>
    <property type="project" value="UniProtKB-UniRule"/>
</dbReference>
<dbReference type="CDD" id="cd00672">
    <property type="entry name" value="CysRS_core"/>
    <property type="match status" value="1"/>
</dbReference>
<dbReference type="FunFam" id="3.40.50.620:FF:000068">
    <property type="entry name" value="Cysteine--tRNA ligase"/>
    <property type="match status" value="1"/>
</dbReference>
<dbReference type="Gene3D" id="1.20.120.1910">
    <property type="entry name" value="Cysteine-tRNA ligase, C-terminal anti-codon recognition domain"/>
    <property type="match status" value="1"/>
</dbReference>
<dbReference type="Gene3D" id="3.40.50.620">
    <property type="entry name" value="HUPs"/>
    <property type="match status" value="1"/>
</dbReference>
<dbReference type="HAMAP" id="MF_00041">
    <property type="entry name" value="Cys_tRNA_synth"/>
    <property type="match status" value="1"/>
</dbReference>
<dbReference type="InterPro" id="IPR015803">
    <property type="entry name" value="Cys-tRNA-ligase"/>
</dbReference>
<dbReference type="InterPro" id="IPR015273">
    <property type="entry name" value="Cys-tRNA-synt_Ia_DALR"/>
</dbReference>
<dbReference type="InterPro" id="IPR024909">
    <property type="entry name" value="Cys-tRNA/MSH_ligase"/>
</dbReference>
<dbReference type="InterPro" id="IPR014729">
    <property type="entry name" value="Rossmann-like_a/b/a_fold"/>
</dbReference>
<dbReference type="InterPro" id="IPR032678">
    <property type="entry name" value="tRNA-synt_1_cat_dom"/>
</dbReference>
<dbReference type="InterPro" id="IPR009080">
    <property type="entry name" value="tRNAsynth_Ia_anticodon-bd"/>
</dbReference>
<dbReference type="NCBIfam" id="TIGR00435">
    <property type="entry name" value="cysS"/>
    <property type="match status" value="1"/>
</dbReference>
<dbReference type="PANTHER" id="PTHR10890:SF30">
    <property type="entry name" value="CYSTEINE--TRNA LIGASE"/>
    <property type="match status" value="1"/>
</dbReference>
<dbReference type="PANTHER" id="PTHR10890">
    <property type="entry name" value="CYSTEINYL-TRNA SYNTHETASE"/>
    <property type="match status" value="1"/>
</dbReference>
<dbReference type="Pfam" id="PF09190">
    <property type="entry name" value="DALR_2"/>
    <property type="match status" value="1"/>
</dbReference>
<dbReference type="Pfam" id="PF01406">
    <property type="entry name" value="tRNA-synt_1e"/>
    <property type="match status" value="1"/>
</dbReference>
<dbReference type="PRINTS" id="PR00983">
    <property type="entry name" value="TRNASYNTHCYS"/>
</dbReference>
<dbReference type="SMART" id="SM00840">
    <property type="entry name" value="DALR_2"/>
    <property type="match status" value="1"/>
</dbReference>
<dbReference type="SUPFAM" id="SSF47323">
    <property type="entry name" value="Anticodon-binding domain of a subclass of class I aminoacyl-tRNA synthetases"/>
    <property type="match status" value="1"/>
</dbReference>
<dbReference type="SUPFAM" id="SSF52374">
    <property type="entry name" value="Nucleotidylyl transferase"/>
    <property type="match status" value="1"/>
</dbReference>
<sequence>MIDSGHLRLHDTVAGAVRDFVPLRAGHVSIYLCGATVQGQPHIGHVRSGVAFDILRRWLMARGYDVAFIRNVTDIDDKILNKAAAAGRPWWEWAATHERAFTAAYDALDVLPPSAEPRATGHITQMIELIELLIETGHAYTGGSDVYFDVLSYPDYGQLSGHKMDYIHQGEGVTTGKRDQRDFTLWKGAKSGEPSWPTPWGRGRPGWHLECSAMARAYLGSEFDIHCGGMDLVFPHHENEIAQSRAVGDGFARYWLHNGWVTMGGEKMSKSLGNVLSIPAVLQRVRPAELRYYLGSAHYRSMLEFSEAALQDAVKAYVGVENFLTRVRTRVGAVGTGELTPRFAAALDDDLAVPIALAEVHHARVEGNRALDIGDHEGALTNAGAIRAMMGILGCDPLDERWESRDETSAALAAVDVLVAAELESRQMAREQRNWVLADQIRDRLKDAGIEVTDTVNGPQWELLAGDKQVDAR</sequence>